<accession>Q59745</accession>
<sequence length="327" mass="35927">MAGETVLVVGGAGYIGSHTCLDLANKGYRPVVFDNFSNGHREFVRWGPAEEGDIRDRARLDEVLAKHKPAAILHFAALIEVGESVKDPVSFYENNVIGTLTLLSAAQAAGINAFVFSSTCATYGLPQSVPLDETHRQVPINPYGRTKYIVEQALADYDQYGSLRSVVLRYFNAAGADFEGRIGEWHQPETHAIPLAIDAALGRRQGFKVFGSDYETRDGTCVRDYIHVLDLADAHVRAVEYLLKGGDSVALNLGTGTGTTVKELLGAIEEVSNRPFPVEYIGRREGDSHTLVANNDKARDVLGWVPQYDLSEIIRSAWDWHAKSNQH</sequence>
<proteinExistence type="inferred from homology"/>
<protein>
    <recommendedName>
        <fullName>UDP-glucose 4-epimerase</fullName>
        <ecNumber>5.1.3.2</ecNumber>
    </recommendedName>
    <alternativeName>
        <fullName>Galactowaldenase</fullName>
    </alternativeName>
    <alternativeName>
        <fullName>UDP-galactose 4-epimerase</fullName>
    </alternativeName>
</protein>
<gene>
    <name type="primary">exoB</name>
</gene>
<comment type="catalytic activity">
    <reaction>
        <text>UDP-alpha-D-glucose = UDP-alpha-D-galactose</text>
        <dbReference type="Rhea" id="RHEA:22168"/>
        <dbReference type="ChEBI" id="CHEBI:58885"/>
        <dbReference type="ChEBI" id="CHEBI:66914"/>
        <dbReference type="EC" id="5.1.3.2"/>
    </reaction>
</comment>
<comment type="cofactor">
    <cofactor>
        <name>NAD(+)</name>
        <dbReference type="ChEBI" id="CHEBI:57540"/>
    </cofactor>
</comment>
<comment type="pathway">
    <text>Carbohydrate metabolism; galactose metabolism.</text>
</comment>
<comment type="pathway">
    <text>Glycan metabolism; exopolysaccharide biosynthesis.</text>
</comment>
<comment type="similarity">
    <text evidence="2">Belongs to the NAD(P)-dependent epimerase/dehydratase family.</text>
</comment>
<feature type="chain" id="PRO_0000183227" description="UDP-glucose 4-epimerase">
    <location>
        <begin position="1"/>
        <end position="327"/>
    </location>
</feature>
<feature type="active site" description="Proton acceptor" evidence="1">
    <location>
        <position position="143"/>
    </location>
</feature>
<feature type="binding site" evidence="1">
    <location>
        <position position="119"/>
    </location>
    <ligand>
        <name>substrate</name>
    </ligand>
</feature>
<evidence type="ECO:0000250" key="1"/>
<evidence type="ECO:0000305" key="2"/>
<dbReference type="EC" id="5.1.3.2"/>
<dbReference type="EMBL" id="X96507">
    <property type="protein sequence ID" value="CAA65359.1"/>
    <property type="molecule type" value="Genomic_DNA"/>
</dbReference>
<dbReference type="SMR" id="Q59745"/>
<dbReference type="UniPathway" id="UPA00214"/>
<dbReference type="UniPathway" id="UPA00631"/>
<dbReference type="GO" id="GO:0003978">
    <property type="term" value="F:UDP-glucose 4-epimerase activity"/>
    <property type="evidence" value="ECO:0007669"/>
    <property type="project" value="UniProtKB-EC"/>
</dbReference>
<dbReference type="GO" id="GO:0033499">
    <property type="term" value="P:galactose catabolic process via UDP-galactose, Leloir pathway"/>
    <property type="evidence" value="ECO:0007669"/>
    <property type="project" value="TreeGrafter"/>
</dbReference>
<dbReference type="GO" id="GO:0000271">
    <property type="term" value="P:polysaccharide biosynthetic process"/>
    <property type="evidence" value="ECO:0007669"/>
    <property type="project" value="UniProtKB-KW"/>
</dbReference>
<dbReference type="CDD" id="cd05247">
    <property type="entry name" value="UDP_G4E_1_SDR_e"/>
    <property type="match status" value="1"/>
</dbReference>
<dbReference type="Gene3D" id="3.40.50.720">
    <property type="entry name" value="NAD(P)-binding Rossmann-like Domain"/>
    <property type="match status" value="1"/>
</dbReference>
<dbReference type="Gene3D" id="3.90.25.10">
    <property type="entry name" value="UDP-galactose 4-epimerase, domain 1"/>
    <property type="match status" value="1"/>
</dbReference>
<dbReference type="InterPro" id="IPR016040">
    <property type="entry name" value="NAD(P)-bd_dom"/>
</dbReference>
<dbReference type="InterPro" id="IPR036291">
    <property type="entry name" value="NAD(P)-bd_dom_sf"/>
</dbReference>
<dbReference type="InterPro" id="IPR005886">
    <property type="entry name" value="UDP_G4E"/>
</dbReference>
<dbReference type="NCBIfam" id="TIGR01179">
    <property type="entry name" value="galE"/>
    <property type="match status" value="1"/>
</dbReference>
<dbReference type="PANTHER" id="PTHR43725:SF53">
    <property type="entry name" value="UDP-ARABINOSE 4-EPIMERASE 1"/>
    <property type="match status" value="1"/>
</dbReference>
<dbReference type="PANTHER" id="PTHR43725">
    <property type="entry name" value="UDP-GLUCOSE 4-EPIMERASE"/>
    <property type="match status" value="1"/>
</dbReference>
<dbReference type="Pfam" id="PF16363">
    <property type="entry name" value="GDP_Man_Dehyd"/>
    <property type="match status" value="1"/>
</dbReference>
<dbReference type="SUPFAM" id="SSF51735">
    <property type="entry name" value="NAD(P)-binding Rossmann-fold domains"/>
    <property type="match status" value="1"/>
</dbReference>
<keyword id="KW-0119">Carbohydrate metabolism</keyword>
<keyword id="KW-0270">Exopolysaccharide synthesis</keyword>
<keyword id="KW-0299">Galactose metabolism</keyword>
<keyword id="KW-0413">Isomerase</keyword>
<keyword id="KW-0520">NAD</keyword>
<organism>
    <name type="scientific">Rhizobium leguminosarum bv. trifolii</name>
    <dbReference type="NCBI Taxonomy" id="386"/>
    <lineage>
        <taxon>Bacteria</taxon>
        <taxon>Pseudomonadati</taxon>
        <taxon>Pseudomonadota</taxon>
        <taxon>Alphaproteobacteria</taxon>
        <taxon>Hyphomicrobiales</taxon>
        <taxon>Rhizobiaceae</taxon>
        <taxon>Rhizobium/Agrobacterium group</taxon>
        <taxon>Rhizobium</taxon>
    </lineage>
</organism>
<reference key="1">
    <citation type="journal article" date="1997" name="Mol. Gen. Genet.">
        <title>Structure and role in symbiosis of the exoB gene of Rhizobium leguminosarum bv trifolii.</title>
        <authorList>
            <person name="Sanchez-Andujar B."/>
            <person name="Coronado C."/>
            <person name="Philip-Hollingsworth S."/>
            <person name="Dazzo F.B."/>
            <person name="Palomares A.J."/>
        </authorList>
    </citation>
    <scope>NUCLEOTIDE SEQUENCE [GENOMIC DNA]</scope>
    <source>
        <strain>RS800</strain>
    </source>
</reference>
<name>EXOB_RHILT</name>